<reference key="1">
    <citation type="journal article" date="1998" name="Science">
        <title>Genome sequence of the nematode C. elegans: a platform for investigating biology.</title>
        <authorList>
            <consortium name="The C. elegans sequencing consortium"/>
        </authorList>
    </citation>
    <scope>NUCLEOTIDE SEQUENCE [LARGE SCALE GENOMIC DNA]</scope>
    <source>
        <strain>Bristol N2</strain>
    </source>
</reference>
<evidence type="ECO:0000255" key="1"/>
<evidence type="ECO:0000256" key="2">
    <source>
        <dbReference type="SAM" id="MobiDB-lite"/>
    </source>
</evidence>
<gene>
    <name type="ORF">F36G3.1</name>
</gene>
<protein>
    <recommendedName>
        <fullName>Uncharacterized protein F36G3.1</fullName>
    </recommendedName>
</protein>
<organism>
    <name type="scientific">Caenorhabditis elegans</name>
    <dbReference type="NCBI Taxonomy" id="6239"/>
    <lineage>
        <taxon>Eukaryota</taxon>
        <taxon>Metazoa</taxon>
        <taxon>Ecdysozoa</taxon>
        <taxon>Nematoda</taxon>
        <taxon>Chromadorea</taxon>
        <taxon>Rhabditida</taxon>
        <taxon>Rhabditina</taxon>
        <taxon>Rhabditomorpha</taxon>
        <taxon>Rhabditoidea</taxon>
        <taxon>Rhabditidae</taxon>
        <taxon>Peloderinae</taxon>
        <taxon>Caenorhabditis</taxon>
    </lineage>
</organism>
<sequence>MDSETDTDTHSICNSVSSGENYKSPESSDCEGYATPLASSLTDISNVINHSVTIKVPDTIADANDLEPGERTPVSTPRAISPPIVKQVMYLQKPRILVMTQREIHEECCSSEEEFYDVDDVQIRDVAQQLLNGVSDDKTETEAGNNDVIIAEEDRADTPIVIEDTREFEETYSEEDERQTPIQMENATSEVSSSEDEISDSVVELTNDMMSKITEIEEIHAQVHSESFGSSDSGDHLEVKSEATNFPEYSNTEEFEVPKNDYVTVENVNESTIDSVVIDSQTPTKDTKNEVNISQNVVNLVRLESHLENYDDETTNTVIAECVYDAQENEKCEKNEEDDLSPVLDSNKIKNSPESKFCEFRAESECYEQTEETDQIKQFVPLMEVSVANQEFDELCDIERNGGNSKDRPKDLNENVKAFDAEHHENSVLEYEQLPDVFSEITIAKTPIPVVHENSISGVSKESQVSFNQEAVQNELMPTHIISDEVETSSTTADNNIPFSDCSTHKVKVDFDGYSSGKEESLSSSTSSESFEFAEPVTENHIQDERAQALRNSIIERYPSNDTDDDELDSVGDEFDEDLLAVKQISAEVEQLVAAINAFGRDEEQQMSAYMVGKKMAAEKKRKSAMDTTAMTSSCQDQTVQTDNNSFILVDRHVPEVMESLQVEIDRLQGDLEKVKSGEKELLQINSKLKEELEESQQTIDGIEIEAEQQYTELTSEIDELCEIVQRKDQELAILKEKVTNVINIENSLKDDVDSQKVIVQRQKEIIENLREELDAITKKLGEVTKLRDKAVEEATLYKMKNMERDRFLSREAQMSMEIEDLQRELNKQKLILNQTSMAKLADTFDRKVLHLENELRERDMLICKQNQIINSHRKSPTGSVITHRKMQPRASVLAAAGNLPSAGSSSESFQNGLDVEAREALLSFILSDRHNQLANIYNIGRILDLTPQEERSVERHLTKDRFT</sequence>
<accession>Q09560</accession>
<feature type="chain" id="PRO_0000065323" description="Uncharacterized protein F36G3.1">
    <location>
        <begin position="1"/>
        <end position="964"/>
    </location>
</feature>
<feature type="region of interest" description="Disordered" evidence="2">
    <location>
        <begin position="1"/>
        <end position="31"/>
    </location>
</feature>
<feature type="region of interest" description="Disordered" evidence="2">
    <location>
        <begin position="169"/>
        <end position="199"/>
    </location>
</feature>
<feature type="coiled-coil region" evidence="1">
    <location>
        <begin position="656"/>
        <end position="840"/>
    </location>
</feature>
<feature type="compositionally biased region" description="Polar residues" evidence="2">
    <location>
        <begin position="10"/>
        <end position="27"/>
    </location>
</feature>
<dbReference type="EMBL" id="Z47069">
    <property type="protein sequence ID" value="CAA87338.1"/>
    <property type="molecule type" value="Genomic_DNA"/>
</dbReference>
<dbReference type="PIR" id="T21865">
    <property type="entry name" value="T21865"/>
</dbReference>
<dbReference type="RefSeq" id="NP_509642.1">
    <property type="nucleotide sequence ID" value="NM_077241.9"/>
</dbReference>
<dbReference type="SMR" id="Q09560"/>
<dbReference type="BioGRID" id="46106">
    <property type="interactions" value="8"/>
</dbReference>
<dbReference type="DIP" id="DIP-27493N"/>
<dbReference type="IntAct" id="Q09560">
    <property type="interactions" value="6"/>
</dbReference>
<dbReference type="STRING" id="6239.F36G3.1.2"/>
<dbReference type="PaxDb" id="6239-F36G3.1"/>
<dbReference type="PeptideAtlas" id="Q09560"/>
<dbReference type="EnsemblMetazoa" id="F36G3.1.1">
    <property type="protein sequence ID" value="F36G3.1.1"/>
    <property type="gene ID" value="WBGene00009482"/>
</dbReference>
<dbReference type="GeneID" id="181191"/>
<dbReference type="KEGG" id="cel:CELE_F36G3.1"/>
<dbReference type="UCSC" id="F36G3.1.1">
    <property type="organism name" value="c. elegans"/>
</dbReference>
<dbReference type="AGR" id="WB:WBGene00009482"/>
<dbReference type="CTD" id="181191"/>
<dbReference type="WormBase" id="F36G3.1">
    <property type="protein sequence ID" value="CE15979"/>
    <property type="gene ID" value="WBGene00009482"/>
</dbReference>
<dbReference type="eggNOG" id="ENOG502SWRA">
    <property type="taxonomic scope" value="Eukaryota"/>
</dbReference>
<dbReference type="HOGENOM" id="CLU_307000_0_0_1"/>
<dbReference type="InParanoid" id="Q09560"/>
<dbReference type="OMA" id="LVMTQRE"/>
<dbReference type="OrthoDB" id="5848685at2759"/>
<dbReference type="PhylomeDB" id="Q09560"/>
<dbReference type="PRO" id="PR:Q09560"/>
<dbReference type="Proteomes" id="UP000001940">
    <property type="component" value="Chromosome X"/>
</dbReference>
<dbReference type="Bgee" id="WBGene00009482">
    <property type="expression patterns" value="Expressed in material anatomical entity and 5 other cell types or tissues"/>
</dbReference>
<proteinExistence type="predicted"/>
<keyword id="KW-0175">Coiled coil</keyword>
<keyword id="KW-1185">Reference proteome</keyword>
<name>YQY1_CAEEL</name>